<accession>Q7CHM1</accession>
<accession>Q74VH3</accession>
<proteinExistence type="inferred from homology"/>
<feature type="chain" id="PRO_0000366280" description="Ribosomal RNA large subunit methyltransferase I">
    <location>
        <begin position="1"/>
        <end position="396"/>
    </location>
</feature>
<feature type="domain" description="PUA" evidence="1">
    <location>
        <begin position="2"/>
        <end position="81"/>
    </location>
</feature>
<comment type="function">
    <text evidence="1">Specifically methylates the cytosine at position 1962 (m5C1962) of 23S rRNA.</text>
</comment>
<comment type="catalytic activity">
    <reaction evidence="1">
        <text>cytidine(1962) in 23S rRNA + S-adenosyl-L-methionine = 5-methylcytidine(1962) in 23S rRNA + S-adenosyl-L-homocysteine + H(+)</text>
        <dbReference type="Rhea" id="RHEA:42912"/>
        <dbReference type="Rhea" id="RHEA-COMP:10382"/>
        <dbReference type="Rhea" id="RHEA-COMP:10386"/>
        <dbReference type="ChEBI" id="CHEBI:15378"/>
        <dbReference type="ChEBI" id="CHEBI:57856"/>
        <dbReference type="ChEBI" id="CHEBI:59789"/>
        <dbReference type="ChEBI" id="CHEBI:74483"/>
        <dbReference type="ChEBI" id="CHEBI:82748"/>
        <dbReference type="EC" id="2.1.1.191"/>
    </reaction>
</comment>
<comment type="subcellular location">
    <subcellularLocation>
        <location evidence="1">Cytoplasm</location>
    </subcellularLocation>
</comment>
<comment type="similarity">
    <text evidence="1">Belongs to the methyltransferase superfamily. RlmI family.</text>
</comment>
<keyword id="KW-0963">Cytoplasm</keyword>
<keyword id="KW-0489">Methyltransferase</keyword>
<keyword id="KW-1185">Reference proteome</keyword>
<keyword id="KW-0694">RNA-binding</keyword>
<keyword id="KW-0698">rRNA processing</keyword>
<keyword id="KW-0949">S-adenosyl-L-methionine</keyword>
<keyword id="KW-0808">Transferase</keyword>
<name>RLMI_YERPE</name>
<evidence type="ECO:0000255" key="1">
    <source>
        <dbReference type="HAMAP-Rule" id="MF_01857"/>
    </source>
</evidence>
<dbReference type="EC" id="2.1.1.191" evidence="1"/>
<dbReference type="EMBL" id="AL590842">
    <property type="protein sequence ID" value="CAL20096.1"/>
    <property type="molecule type" value="Genomic_DNA"/>
</dbReference>
<dbReference type="EMBL" id="AE009952">
    <property type="protein sequence ID" value="AAM86277.1"/>
    <property type="molecule type" value="Genomic_DNA"/>
</dbReference>
<dbReference type="EMBL" id="AE017042">
    <property type="protein sequence ID" value="AAS61579.1"/>
    <property type="molecule type" value="Genomic_DNA"/>
</dbReference>
<dbReference type="PIR" id="AF0176">
    <property type="entry name" value="AF0176"/>
</dbReference>
<dbReference type="RefSeq" id="WP_002213052.1">
    <property type="nucleotide sequence ID" value="NZ_WUCM01000066.1"/>
</dbReference>
<dbReference type="RefSeq" id="YP_002346466.1">
    <property type="nucleotide sequence ID" value="NC_003143.1"/>
</dbReference>
<dbReference type="SMR" id="Q7CHM1"/>
<dbReference type="STRING" id="214092.YPO1445"/>
<dbReference type="PaxDb" id="214092-YPO1445"/>
<dbReference type="DNASU" id="1147672"/>
<dbReference type="EnsemblBacteria" id="AAS61579">
    <property type="protein sequence ID" value="AAS61579"/>
    <property type="gene ID" value="YP_1336"/>
</dbReference>
<dbReference type="GeneID" id="57977118"/>
<dbReference type="KEGG" id="ype:YPO1445"/>
<dbReference type="KEGG" id="ypk:y2725"/>
<dbReference type="KEGG" id="ypm:YP_1336"/>
<dbReference type="PATRIC" id="fig|214092.21.peg.1771"/>
<dbReference type="eggNOG" id="COG1092">
    <property type="taxonomic scope" value="Bacteria"/>
</dbReference>
<dbReference type="HOGENOM" id="CLU_014042_0_0_6"/>
<dbReference type="OMA" id="VMDVFDY"/>
<dbReference type="OrthoDB" id="9805492at2"/>
<dbReference type="Proteomes" id="UP000000815">
    <property type="component" value="Chromosome"/>
</dbReference>
<dbReference type="Proteomes" id="UP000001019">
    <property type="component" value="Chromosome"/>
</dbReference>
<dbReference type="Proteomes" id="UP000002490">
    <property type="component" value="Chromosome"/>
</dbReference>
<dbReference type="GO" id="GO:0005737">
    <property type="term" value="C:cytoplasm"/>
    <property type="evidence" value="ECO:0007669"/>
    <property type="project" value="UniProtKB-SubCell"/>
</dbReference>
<dbReference type="GO" id="GO:0003723">
    <property type="term" value="F:RNA binding"/>
    <property type="evidence" value="ECO:0007669"/>
    <property type="project" value="UniProtKB-KW"/>
</dbReference>
<dbReference type="GO" id="GO:0016434">
    <property type="term" value="F:rRNA (cytosine) methyltransferase activity"/>
    <property type="evidence" value="ECO:0007669"/>
    <property type="project" value="UniProtKB-UniRule"/>
</dbReference>
<dbReference type="CDD" id="cd02440">
    <property type="entry name" value="AdoMet_MTases"/>
    <property type="match status" value="1"/>
</dbReference>
<dbReference type="CDD" id="cd21153">
    <property type="entry name" value="PUA_RlmI"/>
    <property type="match status" value="1"/>
</dbReference>
<dbReference type="CDD" id="cd11572">
    <property type="entry name" value="RlmI_M_like"/>
    <property type="match status" value="1"/>
</dbReference>
<dbReference type="Gene3D" id="2.30.130.10">
    <property type="entry name" value="PUA domain"/>
    <property type="match status" value="1"/>
</dbReference>
<dbReference type="Gene3D" id="3.30.750.80">
    <property type="entry name" value="RNA methyltransferase domain (HRMD) like"/>
    <property type="match status" value="1"/>
</dbReference>
<dbReference type="Gene3D" id="3.40.50.150">
    <property type="entry name" value="Vaccinia Virus protein VP39"/>
    <property type="match status" value="1"/>
</dbReference>
<dbReference type="HAMAP" id="MF_01857">
    <property type="entry name" value="23SrRNA_methyltr_I"/>
    <property type="match status" value="1"/>
</dbReference>
<dbReference type="InterPro" id="IPR002478">
    <property type="entry name" value="PUA"/>
</dbReference>
<dbReference type="InterPro" id="IPR015947">
    <property type="entry name" value="PUA-like_sf"/>
</dbReference>
<dbReference type="InterPro" id="IPR036974">
    <property type="entry name" value="PUA_sf"/>
</dbReference>
<dbReference type="InterPro" id="IPR023542">
    <property type="entry name" value="RLMI"/>
</dbReference>
<dbReference type="InterPro" id="IPR041532">
    <property type="entry name" value="RlmI-like_PUA"/>
</dbReference>
<dbReference type="InterPro" id="IPR019614">
    <property type="entry name" value="SAM-dep_methyl-trfase"/>
</dbReference>
<dbReference type="InterPro" id="IPR029063">
    <property type="entry name" value="SAM-dependent_MTases_sf"/>
</dbReference>
<dbReference type="NCBIfam" id="NF011707">
    <property type="entry name" value="PRK15128.1"/>
    <property type="match status" value="1"/>
</dbReference>
<dbReference type="PANTHER" id="PTHR42873">
    <property type="entry name" value="RIBOSOMAL RNA LARGE SUBUNIT METHYLTRANSFERASE"/>
    <property type="match status" value="1"/>
</dbReference>
<dbReference type="PANTHER" id="PTHR42873:SF1">
    <property type="entry name" value="S-ADENOSYLMETHIONINE-DEPENDENT METHYLTRANSFERASE DOMAIN-CONTAINING PROTEIN"/>
    <property type="match status" value="1"/>
</dbReference>
<dbReference type="Pfam" id="PF10672">
    <property type="entry name" value="Methyltrans_SAM"/>
    <property type="match status" value="1"/>
</dbReference>
<dbReference type="Pfam" id="PF17785">
    <property type="entry name" value="PUA_3"/>
    <property type="match status" value="1"/>
</dbReference>
<dbReference type="SMART" id="SM00359">
    <property type="entry name" value="PUA"/>
    <property type="match status" value="1"/>
</dbReference>
<dbReference type="SUPFAM" id="SSF88697">
    <property type="entry name" value="PUA domain-like"/>
    <property type="match status" value="1"/>
</dbReference>
<dbReference type="SUPFAM" id="SSF53335">
    <property type="entry name" value="S-adenosyl-L-methionine-dependent methyltransferases"/>
    <property type="match status" value="1"/>
</dbReference>
<dbReference type="PROSITE" id="PS50890">
    <property type="entry name" value="PUA"/>
    <property type="match status" value="1"/>
</dbReference>
<gene>
    <name evidence="1" type="primary">rlmI</name>
    <name type="ordered locus">YPO1445</name>
    <name type="ordered locus">y2725</name>
    <name type="ordered locus">YP_1336</name>
</gene>
<organism>
    <name type="scientific">Yersinia pestis</name>
    <dbReference type="NCBI Taxonomy" id="632"/>
    <lineage>
        <taxon>Bacteria</taxon>
        <taxon>Pseudomonadati</taxon>
        <taxon>Pseudomonadota</taxon>
        <taxon>Gammaproteobacteria</taxon>
        <taxon>Enterobacterales</taxon>
        <taxon>Yersiniaceae</taxon>
        <taxon>Yersinia</taxon>
    </lineage>
</organism>
<protein>
    <recommendedName>
        <fullName evidence="1">Ribosomal RNA large subunit methyltransferase I</fullName>
        <ecNumber evidence="1">2.1.1.191</ecNumber>
    </recommendedName>
    <alternativeName>
        <fullName evidence="1">23S rRNA m5C1962 methyltransferase</fullName>
    </alternativeName>
    <alternativeName>
        <fullName evidence="1">rRNA (cytosine-C(5)-)-methyltransferase RlmI</fullName>
    </alternativeName>
</protein>
<sequence>MTVRLILAKGREKSLLRRHPWIFSGAVQRLEGDALSGETIDILDSQGKWLARAAYSPESQILARVWTFQQDEVIDCAFFIRRLQQAQNWRDWLAQRDGLNGYRLIAGESDGLPGITIDRFQNFLVLQLLSAGAEYQRETLVSALQHCYPECSIYDRSDVSVRKKEGLPLTQGLICGEMPPALLPISENGMQLFVDIQQGHKTGFYLDQRDSRLAARNYANGRRVLNCFSYTGAFAVAALMGNCQQVISVDTSQSVLDIAKQNIELNQLDLSKTEFVRDDVFQLLRSYRAQGEKFDLIIMDPPKFVENKSQLASACRGYKDINMLAIQLLRPGGILLSFSCSGLMPVDLFQKILADAALDAGHDIQFIEQFRQAADHPVIAAYPEGLYLKGFACRVM</sequence>
<reference key="1">
    <citation type="journal article" date="2001" name="Nature">
        <title>Genome sequence of Yersinia pestis, the causative agent of plague.</title>
        <authorList>
            <person name="Parkhill J."/>
            <person name="Wren B.W."/>
            <person name="Thomson N.R."/>
            <person name="Titball R.W."/>
            <person name="Holden M.T.G."/>
            <person name="Prentice M.B."/>
            <person name="Sebaihia M."/>
            <person name="James K.D."/>
            <person name="Churcher C.M."/>
            <person name="Mungall K.L."/>
            <person name="Baker S."/>
            <person name="Basham D."/>
            <person name="Bentley S.D."/>
            <person name="Brooks K."/>
            <person name="Cerdeno-Tarraga A.-M."/>
            <person name="Chillingworth T."/>
            <person name="Cronin A."/>
            <person name="Davies R.M."/>
            <person name="Davis P."/>
            <person name="Dougan G."/>
            <person name="Feltwell T."/>
            <person name="Hamlin N."/>
            <person name="Holroyd S."/>
            <person name="Jagels K."/>
            <person name="Karlyshev A.V."/>
            <person name="Leather S."/>
            <person name="Moule S."/>
            <person name="Oyston P.C.F."/>
            <person name="Quail M.A."/>
            <person name="Rutherford K.M."/>
            <person name="Simmonds M."/>
            <person name="Skelton J."/>
            <person name="Stevens K."/>
            <person name="Whitehead S."/>
            <person name="Barrell B.G."/>
        </authorList>
    </citation>
    <scope>NUCLEOTIDE SEQUENCE [LARGE SCALE GENOMIC DNA]</scope>
    <source>
        <strain>CO-92 / Biovar Orientalis</strain>
    </source>
</reference>
<reference key="2">
    <citation type="journal article" date="2002" name="J. Bacteriol.">
        <title>Genome sequence of Yersinia pestis KIM.</title>
        <authorList>
            <person name="Deng W."/>
            <person name="Burland V."/>
            <person name="Plunkett G. III"/>
            <person name="Boutin A."/>
            <person name="Mayhew G.F."/>
            <person name="Liss P."/>
            <person name="Perna N.T."/>
            <person name="Rose D.J."/>
            <person name="Mau B."/>
            <person name="Zhou S."/>
            <person name="Schwartz D.C."/>
            <person name="Fetherston J.D."/>
            <person name="Lindler L.E."/>
            <person name="Brubaker R.R."/>
            <person name="Plano G.V."/>
            <person name="Straley S.C."/>
            <person name="McDonough K.A."/>
            <person name="Nilles M.L."/>
            <person name="Matson J.S."/>
            <person name="Blattner F.R."/>
            <person name="Perry R.D."/>
        </authorList>
    </citation>
    <scope>NUCLEOTIDE SEQUENCE [LARGE SCALE GENOMIC DNA]</scope>
    <source>
        <strain>KIM10+ / Biovar Mediaevalis</strain>
    </source>
</reference>
<reference key="3">
    <citation type="journal article" date="2004" name="DNA Res.">
        <title>Complete genome sequence of Yersinia pestis strain 91001, an isolate avirulent to humans.</title>
        <authorList>
            <person name="Song Y."/>
            <person name="Tong Z."/>
            <person name="Wang J."/>
            <person name="Wang L."/>
            <person name="Guo Z."/>
            <person name="Han Y."/>
            <person name="Zhang J."/>
            <person name="Pei D."/>
            <person name="Zhou D."/>
            <person name="Qin H."/>
            <person name="Pang X."/>
            <person name="Han Y."/>
            <person name="Zhai J."/>
            <person name="Li M."/>
            <person name="Cui B."/>
            <person name="Qi Z."/>
            <person name="Jin L."/>
            <person name="Dai R."/>
            <person name="Chen F."/>
            <person name="Li S."/>
            <person name="Ye C."/>
            <person name="Du Z."/>
            <person name="Lin W."/>
            <person name="Wang J."/>
            <person name="Yu J."/>
            <person name="Yang H."/>
            <person name="Wang J."/>
            <person name="Huang P."/>
            <person name="Yang R."/>
        </authorList>
    </citation>
    <scope>NUCLEOTIDE SEQUENCE [LARGE SCALE GENOMIC DNA]</scope>
    <source>
        <strain>91001 / Biovar Mediaevalis</strain>
    </source>
</reference>